<organism>
    <name type="scientific">Synechococcus sp. (strain WH7803)</name>
    <dbReference type="NCBI Taxonomy" id="32051"/>
    <lineage>
        <taxon>Bacteria</taxon>
        <taxon>Bacillati</taxon>
        <taxon>Cyanobacteriota</taxon>
        <taxon>Cyanophyceae</taxon>
        <taxon>Synechococcales</taxon>
        <taxon>Synechococcaceae</taxon>
        <taxon>Synechococcus</taxon>
    </lineage>
</organism>
<dbReference type="EC" id="3.4.11.1" evidence="1"/>
<dbReference type="EC" id="3.4.11.10" evidence="1"/>
<dbReference type="EMBL" id="CT971583">
    <property type="protein sequence ID" value="CAK24377.1"/>
    <property type="molecule type" value="Genomic_DNA"/>
</dbReference>
<dbReference type="SMR" id="A5GN62"/>
<dbReference type="STRING" id="32051.SynWH7803_1951"/>
<dbReference type="MEROPS" id="M17.A03"/>
<dbReference type="KEGG" id="syx:SynWH7803_1951"/>
<dbReference type="eggNOG" id="COG0260">
    <property type="taxonomic scope" value="Bacteria"/>
</dbReference>
<dbReference type="HOGENOM" id="CLU_013734_5_1_3"/>
<dbReference type="OrthoDB" id="9809354at2"/>
<dbReference type="Proteomes" id="UP000001566">
    <property type="component" value="Chromosome"/>
</dbReference>
<dbReference type="GO" id="GO:0005737">
    <property type="term" value="C:cytoplasm"/>
    <property type="evidence" value="ECO:0007669"/>
    <property type="project" value="UniProtKB-SubCell"/>
</dbReference>
<dbReference type="GO" id="GO:0030145">
    <property type="term" value="F:manganese ion binding"/>
    <property type="evidence" value="ECO:0007669"/>
    <property type="project" value="UniProtKB-UniRule"/>
</dbReference>
<dbReference type="GO" id="GO:0070006">
    <property type="term" value="F:metalloaminopeptidase activity"/>
    <property type="evidence" value="ECO:0007669"/>
    <property type="project" value="InterPro"/>
</dbReference>
<dbReference type="GO" id="GO:0006508">
    <property type="term" value="P:proteolysis"/>
    <property type="evidence" value="ECO:0007669"/>
    <property type="project" value="UniProtKB-KW"/>
</dbReference>
<dbReference type="CDD" id="cd00433">
    <property type="entry name" value="Peptidase_M17"/>
    <property type="match status" value="1"/>
</dbReference>
<dbReference type="Gene3D" id="3.40.220.10">
    <property type="entry name" value="Leucine Aminopeptidase, subunit E, domain 1"/>
    <property type="match status" value="1"/>
</dbReference>
<dbReference type="Gene3D" id="3.40.630.10">
    <property type="entry name" value="Zn peptidases"/>
    <property type="match status" value="1"/>
</dbReference>
<dbReference type="HAMAP" id="MF_00181">
    <property type="entry name" value="Cytosol_peptidase_M17"/>
    <property type="match status" value="1"/>
</dbReference>
<dbReference type="InterPro" id="IPR011356">
    <property type="entry name" value="Leucine_aapep/pepB"/>
</dbReference>
<dbReference type="InterPro" id="IPR043472">
    <property type="entry name" value="Macro_dom-like"/>
</dbReference>
<dbReference type="InterPro" id="IPR000819">
    <property type="entry name" value="Peptidase_M17_C"/>
</dbReference>
<dbReference type="InterPro" id="IPR023042">
    <property type="entry name" value="Peptidase_M17_leu_NH2_pept"/>
</dbReference>
<dbReference type="InterPro" id="IPR008283">
    <property type="entry name" value="Peptidase_M17_N"/>
</dbReference>
<dbReference type="NCBIfam" id="NF002073">
    <property type="entry name" value="PRK00913.1-2"/>
    <property type="match status" value="1"/>
</dbReference>
<dbReference type="NCBIfam" id="NF002076">
    <property type="entry name" value="PRK00913.2-3"/>
    <property type="match status" value="1"/>
</dbReference>
<dbReference type="PANTHER" id="PTHR11963:SF23">
    <property type="entry name" value="CYTOSOL AMINOPEPTIDASE"/>
    <property type="match status" value="1"/>
</dbReference>
<dbReference type="PANTHER" id="PTHR11963">
    <property type="entry name" value="LEUCINE AMINOPEPTIDASE-RELATED"/>
    <property type="match status" value="1"/>
</dbReference>
<dbReference type="Pfam" id="PF00883">
    <property type="entry name" value="Peptidase_M17"/>
    <property type="match status" value="1"/>
</dbReference>
<dbReference type="Pfam" id="PF02789">
    <property type="entry name" value="Peptidase_M17_N"/>
    <property type="match status" value="1"/>
</dbReference>
<dbReference type="PRINTS" id="PR00481">
    <property type="entry name" value="LAMNOPPTDASE"/>
</dbReference>
<dbReference type="SUPFAM" id="SSF52949">
    <property type="entry name" value="Macro domain-like"/>
    <property type="match status" value="1"/>
</dbReference>
<dbReference type="SUPFAM" id="SSF53187">
    <property type="entry name" value="Zn-dependent exopeptidases"/>
    <property type="match status" value="1"/>
</dbReference>
<dbReference type="PROSITE" id="PS00631">
    <property type="entry name" value="CYTOSOL_AP"/>
    <property type="match status" value="1"/>
</dbReference>
<proteinExistence type="inferred from homology"/>
<protein>
    <recommendedName>
        <fullName evidence="1">Probable cytosol aminopeptidase</fullName>
        <ecNumber evidence="1">3.4.11.1</ecNumber>
    </recommendedName>
    <alternativeName>
        <fullName evidence="1">Leucine aminopeptidase</fullName>
        <shortName evidence="1">LAP</shortName>
        <ecNumber evidence="1">3.4.11.10</ecNumber>
    </alternativeName>
    <alternativeName>
        <fullName evidence="1">Leucyl aminopeptidase</fullName>
    </alternativeName>
</protein>
<feature type="chain" id="PRO_1000019991" description="Probable cytosol aminopeptidase">
    <location>
        <begin position="1"/>
        <end position="493"/>
    </location>
</feature>
<feature type="active site" evidence="1">
    <location>
        <position position="269"/>
    </location>
</feature>
<feature type="active site" evidence="1">
    <location>
        <position position="345"/>
    </location>
</feature>
<feature type="binding site" evidence="1">
    <location>
        <position position="257"/>
    </location>
    <ligand>
        <name>Mn(2+)</name>
        <dbReference type="ChEBI" id="CHEBI:29035"/>
        <label>2</label>
    </ligand>
</feature>
<feature type="binding site" evidence="1">
    <location>
        <position position="262"/>
    </location>
    <ligand>
        <name>Mn(2+)</name>
        <dbReference type="ChEBI" id="CHEBI:29035"/>
        <label>1</label>
    </ligand>
</feature>
<feature type="binding site" evidence="1">
    <location>
        <position position="262"/>
    </location>
    <ligand>
        <name>Mn(2+)</name>
        <dbReference type="ChEBI" id="CHEBI:29035"/>
        <label>2</label>
    </ligand>
</feature>
<feature type="binding site" evidence="1">
    <location>
        <position position="281"/>
    </location>
    <ligand>
        <name>Mn(2+)</name>
        <dbReference type="ChEBI" id="CHEBI:29035"/>
        <label>2</label>
    </ligand>
</feature>
<feature type="binding site" evidence="1">
    <location>
        <position position="341"/>
    </location>
    <ligand>
        <name>Mn(2+)</name>
        <dbReference type="ChEBI" id="CHEBI:29035"/>
        <label>1</label>
    </ligand>
</feature>
<feature type="binding site" evidence="1">
    <location>
        <position position="343"/>
    </location>
    <ligand>
        <name>Mn(2+)</name>
        <dbReference type="ChEBI" id="CHEBI:29035"/>
        <label>1</label>
    </ligand>
</feature>
<feature type="binding site" evidence="1">
    <location>
        <position position="343"/>
    </location>
    <ligand>
        <name>Mn(2+)</name>
        <dbReference type="ChEBI" id="CHEBI:29035"/>
        <label>2</label>
    </ligand>
</feature>
<gene>
    <name evidence="1" type="primary">pepA</name>
    <name type="ordered locus">SynWH7803_1951</name>
</gene>
<accession>A5GN62</accession>
<comment type="function">
    <text evidence="1">Presumably involved in the processing and regular turnover of intracellular proteins. Catalyzes the removal of unsubstituted N-terminal amino acids from various peptides.</text>
</comment>
<comment type="catalytic activity">
    <reaction evidence="1">
        <text>Release of an N-terminal amino acid, Xaa-|-Yaa-, in which Xaa is preferably Leu, but may be other amino acids including Pro although not Arg or Lys, and Yaa may be Pro. Amino acid amides and methyl esters are also readily hydrolyzed, but rates on arylamides are exceedingly low.</text>
        <dbReference type="EC" id="3.4.11.1"/>
    </reaction>
</comment>
<comment type="catalytic activity">
    <reaction evidence="1">
        <text>Release of an N-terminal amino acid, preferentially leucine, but not glutamic or aspartic acids.</text>
        <dbReference type="EC" id="3.4.11.10"/>
    </reaction>
</comment>
<comment type="cofactor">
    <cofactor evidence="1">
        <name>Mn(2+)</name>
        <dbReference type="ChEBI" id="CHEBI:29035"/>
    </cofactor>
    <text evidence="1">Binds 2 manganese ions per subunit.</text>
</comment>
<comment type="subcellular location">
    <subcellularLocation>
        <location evidence="1">Cytoplasm</location>
    </subcellularLocation>
</comment>
<comment type="similarity">
    <text evidence="1">Belongs to the peptidase M17 family.</text>
</comment>
<keyword id="KW-0031">Aminopeptidase</keyword>
<keyword id="KW-0963">Cytoplasm</keyword>
<keyword id="KW-0378">Hydrolase</keyword>
<keyword id="KW-0464">Manganese</keyword>
<keyword id="KW-0479">Metal-binding</keyword>
<keyword id="KW-0645">Protease</keyword>
<keyword id="KW-1185">Reference proteome</keyword>
<sequence>MKISLSPATPEAWSGSVLALGIPENDPQGLVAAMEQRFSLQLSDWLKQKPFSGKPGDCVSLPLLRSDCTALVLVGLGEASSVDRDRLRLAAAAAARAAQGQGGTLGLLLPWSSDTPEEDAAAAAEAVRLALYSDERFRSKPEPSPKPDQLELLGSLPGGLSHGLEAVHPVCAGVELARELVAAPPNSVTPAELARTASHLAHEHGLELTILERSDCEERGMGSFLSVCQGSDMDPKFIHLTYRPNDAASKRLVLVGKGLTFDSGGYNLKVGAAQIDMMKFDMGGSAAVFGAMRAIAELRPAGVEVHMLVASCENMINGSAVHPGDIVTASNGTTIEINNTDAEGRLTLADALVYACKLKPDAIVDLATLTGACVIALGDEIAGLWSGDDSLSSQLEMAAQAAGEGLWRMPLHSPYRKGLKSLLADMKNTGPRPGGSITAALFLKEFVDAGIPWAHIDIAGTVWSDKGRGLDPSGATGYGVRTLVNWITNQANT</sequence>
<name>AMPA_SYNPW</name>
<reference key="1">
    <citation type="submission" date="2006-05" db="EMBL/GenBank/DDBJ databases">
        <authorList>
            <consortium name="Genoscope"/>
        </authorList>
    </citation>
    <scope>NUCLEOTIDE SEQUENCE [LARGE SCALE GENOMIC DNA]</scope>
    <source>
        <strain>WH7803</strain>
    </source>
</reference>
<evidence type="ECO:0000255" key="1">
    <source>
        <dbReference type="HAMAP-Rule" id="MF_00181"/>
    </source>
</evidence>